<sequence>MGHQNAAVSENQNHDDGAASSPGFKLVGFSKFVRKNPKSDKFKVKRFHHIEFWCGDATNVARRFSWGLGMRFSAKSDLSTGNMVHASYLLTSGDLRFLFTAPYSPSLSAGEIKPTTTASIPSFDHGSCRSFFSSHGLGVRAVAIEVEDAESAFSISVANGAIPSSPPIVLNEAVTIAEVKLYGDVVLRYVSYKAEDTEKSEFLPGFERVEDASSFPLDYGIRRLDHAVGNVPELGPALTYVAGFTGFHQFAEFTADDVGTAESGLNSAVLASNDEMVLLPINEPVHGTKRKSQIQTYLEHNEGAGLQHLALMSEDIFRTLREMRKRSSIGGFDFMPSPPPTYYQNLKKRVGDVLSDDQIKECEELGILVDRDDQGTLLQIFTKPLGDRPTIFIEIIQRVGCMMKDEEGKAYQSGGCGGFGKGNFSELFKSIEEYEKTLEAKQLVG</sequence>
<feature type="chain" id="PRO_0000088397" description="4-hydroxyphenylpyruvate dioxygenase">
    <location>
        <begin position="1"/>
        <end position="445"/>
    </location>
</feature>
<feature type="domain" description="VOC 1" evidence="1">
    <location>
        <begin position="46"/>
        <end position="192"/>
    </location>
</feature>
<feature type="domain" description="VOC 2" evidence="1">
    <location>
        <begin position="223"/>
        <end position="383"/>
    </location>
</feature>
<feature type="region of interest" description="Disordered" evidence="2">
    <location>
        <begin position="1"/>
        <end position="20"/>
    </location>
</feature>
<feature type="compositionally biased region" description="Polar residues" evidence="2">
    <location>
        <begin position="1"/>
        <end position="11"/>
    </location>
</feature>
<feature type="binding site" evidence="5">
    <location>
        <position position="226"/>
    </location>
    <ligand>
        <name>Fe cation</name>
        <dbReference type="ChEBI" id="CHEBI:24875"/>
    </ligand>
</feature>
<feature type="binding site" evidence="5">
    <location>
        <position position="308"/>
    </location>
    <ligand>
        <name>Fe cation</name>
        <dbReference type="ChEBI" id="CHEBI:24875"/>
    </ligand>
</feature>
<feature type="binding site" evidence="5">
    <location>
        <position position="394"/>
    </location>
    <ligand>
        <name>Fe cation</name>
        <dbReference type="ChEBI" id="CHEBI:24875"/>
    </ligand>
</feature>
<feature type="strand" evidence="12">
    <location>
        <begin position="44"/>
        <end position="53"/>
    </location>
</feature>
<feature type="helix" evidence="12">
    <location>
        <begin position="57"/>
        <end position="68"/>
    </location>
</feature>
<feature type="strand" evidence="12">
    <location>
        <begin position="71"/>
        <end position="77"/>
    </location>
</feature>
<feature type="helix" evidence="12">
    <location>
        <begin position="78"/>
        <end position="80"/>
    </location>
</feature>
<feature type="strand" evidence="12">
    <location>
        <begin position="83"/>
        <end position="92"/>
    </location>
</feature>
<feature type="strand" evidence="12">
    <location>
        <begin position="95"/>
        <end position="102"/>
    </location>
</feature>
<feature type="helix" evidence="12">
    <location>
        <begin position="105"/>
        <end position="108"/>
    </location>
</feature>
<feature type="helix" evidence="12">
    <location>
        <begin position="113"/>
        <end position="115"/>
    </location>
</feature>
<feature type="helix" evidence="12">
    <location>
        <begin position="125"/>
        <end position="135"/>
    </location>
</feature>
<feature type="strand" evidence="12">
    <location>
        <begin position="137"/>
        <end position="147"/>
    </location>
</feature>
<feature type="helix" evidence="12">
    <location>
        <begin position="149"/>
        <end position="158"/>
    </location>
</feature>
<feature type="strand" evidence="12">
    <location>
        <begin position="163"/>
        <end position="170"/>
    </location>
</feature>
<feature type="turn" evidence="12">
    <location>
        <begin position="171"/>
        <end position="173"/>
    </location>
</feature>
<feature type="strand" evidence="12">
    <location>
        <begin position="174"/>
        <end position="182"/>
    </location>
</feature>
<feature type="strand" evidence="12">
    <location>
        <begin position="185"/>
        <end position="192"/>
    </location>
</feature>
<feature type="turn" evidence="12">
    <location>
        <begin position="211"/>
        <end position="213"/>
    </location>
</feature>
<feature type="strand" evidence="12">
    <location>
        <begin position="219"/>
        <end position="230"/>
    </location>
</feature>
<feature type="helix" evidence="12">
    <location>
        <begin position="234"/>
        <end position="245"/>
    </location>
</feature>
<feature type="strand" evidence="11">
    <location>
        <begin position="248"/>
        <end position="253"/>
    </location>
</feature>
<feature type="strand" evidence="12">
    <location>
        <begin position="265"/>
        <end position="271"/>
    </location>
</feature>
<feature type="strand" evidence="9">
    <location>
        <begin position="273"/>
        <end position="275"/>
    </location>
</feature>
<feature type="strand" evidence="12">
    <location>
        <begin position="277"/>
        <end position="284"/>
    </location>
</feature>
<feature type="strand" evidence="10">
    <location>
        <begin position="287"/>
        <end position="290"/>
    </location>
</feature>
<feature type="helix" evidence="12">
    <location>
        <begin position="293"/>
        <end position="301"/>
    </location>
</feature>
<feature type="strand" evidence="12">
    <location>
        <begin position="305"/>
        <end position="314"/>
    </location>
</feature>
<feature type="helix" evidence="12">
    <location>
        <begin position="316"/>
        <end position="326"/>
    </location>
</feature>
<feature type="turn" evidence="12">
    <location>
        <begin position="327"/>
        <end position="330"/>
    </location>
</feature>
<feature type="helix" evidence="12">
    <location>
        <begin position="340"/>
        <end position="344"/>
    </location>
</feature>
<feature type="helix" evidence="12">
    <location>
        <begin position="346"/>
        <end position="350"/>
    </location>
</feature>
<feature type="turn" evidence="12">
    <location>
        <begin position="351"/>
        <end position="353"/>
    </location>
</feature>
<feature type="helix" evidence="12">
    <location>
        <begin position="356"/>
        <end position="365"/>
    </location>
</feature>
<feature type="strand" evidence="12">
    <location>
        <begin position="368"/>
        <end position="371"/>
    </location>
</feature>
<feature type="strand" evidence="12">
    <location>
        <begin position="373"/>
        <end position="383"/>
    </location>
</feature>
<feature type="strand" evidence="12">
    <location>
        <begin position="385"/>
        <end position="389"/>
    </location>
</feature>
<feature type="strand" evidence="12">
    <location>
        <begin position="392"/>
        <end position="400"/>
    </location>
</feature>
<feature type="strand" evidence="8">
    <location>
        <begin position="406"/>
        <end position="408"/>
    </location>
</feature>
<feature type="turn" evidence="12">
    <location>
        <begin position="414"/>
        <end position="417"/>
    </location>
</feature>
<feature type="helix" evidence="12">
    <location>
        <begin position="422"/>
        <end position="435"/>
    </location>
</feature>
<accession>P93836</accession>
<accession>F4IDP1</accession>
<accession>O04330</accession>
<accession>Q9SHK1</accession>
<comment type="function">
    <text evidence="5">Catalyzes the conversion of 4-hydroxyphenylpyruvic acid to homogentisic acid, one of the steps in tyrosine catabolism.</text>
</comment>
<comment type="catalytic activity">
    <reaction evidence="5">
        <text>3-(4-hydroxyphenyl)pyruvate + O2 = homogentisate + CO2</text>
        <dbReference type="Rhea" id="RHEA:16189"/>
        <dbReference type="ChEBI" id="CHEBI:15379"/>
        <dbReference type="ChEBI" id="CHEBI:16169"/>
        <dbReference type="ChEBI" id="CHEBI:16526"/>
        <dbReference type="ChEBI" id="CHEBI:36242"/>
        <dbReference type="EC" id="1.13.11.27"/>
    </reaction>
    <physiologicalReaction direction="left-to-right" evidence="7">
        <dbReference type="Rhea" id="RHEA:16190"/>
    </physiologicalReaction>
</comment>
<comment type="cofactor">
    <cofactor evidence="5">
        <name>Fe cation</name>
        <dbReference type="ChEBI" id="CHEBI:24875"/>
    </cofactor>
    <text evidence="5">Binds 1 Fe cation per subunit.</text>
</comment>
<comment type="biophysicochemical properties">
    <kinetics>
        <KM evidence="5">11 uM for 4-hydroxyphenylpyruvic acid</KM>
    </kinetics>
</comment>
<comment type="pathway">
    <text>Amino-acid degradation; L-phenylalanine degradation; acetoacetate and fumarate from L-phenylalanine: step 3/6.</text>
</comment>
<comment type="pathway">
    <text>Cofactor biosynthesis; prenylquinone biosynthesis.</text>
</comment>
<comment type="subunit">
    <text evidence="4 5">Homodimer.</text>
</comment>
<comment type="interaction">
    <interactant intactId="EBI-1251387">
        <id>P93836</id>
    </interactant>
    <interactant intactId="EBI-1251387">
        <id>P93836</id>
        <label>HPD</label>
    </interactant>
    <organismsDiffer>false</organismsDiffer>
    <experiments>2</experiments>
</comment>
<comment type="subcellular location">
    <subcellularLocation>
        <location evidence="3">Cytoplasm</location>
    </subcellularLocation>
</comment>
<comment type="alternative products">
    <event type="alternative splicing"/>
    <isoform>
        <id>P93836-1</id>
        <name>1</name>
        <sequence type="displayed"/>
    </isoform>
    <text>A number of isoforms are produced. According to EST sequences.</text>
</comment>
<comment type="similarity">
    <text evidence="6">Belongs to the 4HPPD family.</text>
</comment>
<comment type="sequence caution" evidence="6">
    <conflict type="erroneous initiation">
        <sequence resource="EMBL-CDS" id="AAF24813"/>
    </conflict>
    <text>Extended N-terminus.</text>
</comment>
<protein>
    <recommendedName>
        <fullName>4-hydroxyphenylpyruvate dioxygenase</fullName>
        <ecNumber evidence="5">1.13.11.27</ecNumber>
    </recommendedName>
    <alternativeName>
        <fullName>4-hydroxyphenylpyruvic acid oxidase</fullName>
        <shortName>4HPPD</shortName>
        <shortName>HPD</shortName>
        <shortName>HPPDase</shortName>
    </alternativeName>
</protein>
<evidence type="ECO:0000255" key="1">
    <source>
        <dbReference type="PROSITE-ProRule" id="PRU01163"/>
    </source>
</evidence>
<evidence type="ECO:0000256" key="2">
    <source>
        <dbReference type="SAM" id="MobiDB-lite"/>
    </source>
</evidence>
<evidence type="ECO:0000269" key="3">
    <source>
    </source>
</evidence>
<evidence type="ECO:0000269" key="4">
    <source>
    </source>
</evidence>
<evidence type="ECO:0000269" key="5">
    <source>
    </source>
</evidence>
<evidence type="ECO:0000305" key="6"/>
<evidence type="ECO:0000305" key="7">
    <source>
    </source>
</evidence>
<evidence type="ECO:0007829" key="8">
    <source>
        <dbReference type="PDB" id="1SP9"/>
    </source>
</evidence>
<evidence type="ECO:0007829" key="9">
    <source>
        <dbReference type="PDB" id="5YWI"/>
    </source>
</evidence>
<evidence type="ECO:0007829" key="10">
    <source>
        <dbReference type="PDB" id="7X5R"/>
    </source>
</evidence>
<evidence type="ECO:0007829" key="11">
    <source>
        <dbReference type="PDB" id="8H6A"/>
    </source>
</evidence>
<evidence type="ECO:0007829" key="12">
    <source>
        <dbReference type="PDB" id="8X6A"/>
    </source>
</evidence>
<organism>
    <name type="scientific">Arabidopsis thaliana</name>
    <name type="common">Mouse-ear cress</name>
    <dbReference type="NCBI Taxonomy" id="3702"/>
    <lineage>
        <taxon>Eukaryota</taxon>
        <taxon>Viridiplantae</taxon>
        <taxon>Streptophyta</taxon>
        <taxon>Embryophyta</taxon>
        <taxon>Tracheophyta</taxon>
        <taxon>Spermatophyta</taxon>
        <taxon>Magnoliopsida</taxon>
        <taxon>eudicotyledons</taxon>
        <taxon>Gunneridae</taxon>
        <taxon>Pentapetalae</taxon>
        <taxon>rosids</taxon>
        <taxon>malvids</taxon>
        <taxon>Brassicales</taxon>
        <taxon>Brassicaceae</taxon>
        <taxon>Camelineae</taxon>
        <taxon>Arabidopsis</taxon>
    </lineage>
</organism>
<keyword id="KW-0002">3D-structure</keyword>
<keyword id="KW-0025">Alternative splicing</keyword>
<keyword id="KW-0963">Cytoplasm</keyword>
<keyword id="KW-0223">Dioxygenase</keyword>
<keyword id="KW-0408">Iron</keyword>
<keyword id="KW-0479">Metal-binding</keyword>
<keyword id="KW-0560">Oxidoreductase</keyword>
<keyword id="KW-0585">Phenylalanine catabolism</keyword>
<keyword id="KW-1185">Reference proteome</keyword>
<keyword id="KW-0677">Repeat</keyword>
<keyword id="KW-0828">Tyrosine catabolism</keyword>
<reference key="1">
    <citation type="online journal article" date="1997" name="Plant Gene Register">
        <title>Cloning of an Arabidopsis thaliana cDNA for p-hydroxyphenylpyruvate dioxygenase.</title>
        <authorList>
            <person name="Bartley G.E."/>
            <person name="Maxwell C.A."/>
            <person name="Wittenbach V.A."/>
            <person name="Scolnik P.A."/>
        </authorList>
        <locator>PGR97-065</locator>
    </citation>
    <scope>NUCLEOTIDE SEQUENCE [MRNA]</scope>
    <source>
        <strain>cv. Wassilewskija</strain>
    </source>
</reference>
<reference key="2">
    <citation type="submission" date="1997-06" db="EMBL/GenBank/DDBJ databases">
        <authorList>
            <person name="Norris S.R."/>
            <person name="Dellapenna D."/>
        </authorList>
    </citation>
    <scope>NUCLEOTIDE SEQUENCE [MRNA]</scope>
    <source>
        <strain>cv. Columbia</strain>
    </source>
</reference>
<reference key="3">
    <citation type="journal article" date="1999" name="Plant Physiol.">
        <title>Characterization and subcellular compartmentation of recombinant 4-hydroxyphenylpyruvate dioxygenase from Arabidopsis in transgenic tobacco.</title>
        <authorList>
            <person name="Garcia I."/>
            <person name="Rodgers M."/>
            <person name="Pepin R."/>
            <person name="Hsieh T.-F."/>
            <person name="Matringe M."/>
        </authorList>
    </citation>
    <scope>NUCLEOTIDE SEQUENCE [MRNA]</scope>
    <scope>SUBCELLULAR LOCATION</scope>
    <source>
        <strain>cv. Columbia</strain>
    </source>
</reference>
<reference key="4">
    <citation type="journal article" date="2000" name="Nature">
        <title>Sequence and analysis of chromosome 1 of the plant Arabidopsis thaliana.</title>
        <authorList>
            <person name="Theologis A."/>
            <person name="Ecker J.R."/>
            <person name="Palm C.J."/>
            <person name="Federspiel N.A."/>
            <person name="Kaul S."/>
            <person name="White O."/>
            <person name="Alonso J."/>
            <person name="Altafi H."/>
            <person name="Araujo R."/>
            <person name="Bowman C.L."/>
            <person name="Brooks S.Y."/>
            <person name="Buehler E."/>
            <person name="Chan A."/>
            <person name="Chao Q."/>
            <person name="Chen H."/>
            <person name="Cheuk R.F."/>
            <person name="Chin C.W."/>
            <person name="Chung M.K."/>
            <person name="Conn L."/>
            <person name="Conway A.B."/>
            <person name="Conway A.R."/>
            <person name="Creasy T.H."/>
            <person name="Dewar K."/>
            <person name="Dunn P."/>
            <person name="Etgu P."/>
            <person name="Feldblyum T.V."/>
            <person name="Feng J.-D."/>
            <person name="Fong B."/>
            <person name="Fujii C.Y."/>
            <person name="Gill J.E."/>
            <person name="Goldsmith A.D."/>
            <person name="Haas B."/>
            <person name="Hansen N.F."/>
            <person name="Hughes B."/>
            <person name="Huizar L."/>
            <person name="Hunter J.L."/>
            <person name="Jenkins J."/>
            <person name="Johnson-Hopson C."/>
            <person name="Khan S."/>
            <person name="Khaykin E."/>
            <person name="Kim C.J."/>
            <person name="Koo H.L."/>
            <person name="Kremenetskaia I."/>
            <person name="Kurtz D.B."/>
            <person name="Kwan A."/>
            <person name="Lam B."/>
            <person name="Langin-Hooper S."/>
            <person name="Lee A."/>
            <person name="Lee J.M."/>
            <person name="Lenz C.A."/>
            <person name="Li J.H."/>
            <person name="Li Y.-P."/>
            <person name="Lin X."/>
            <person name="Liu S.X."/>
            <person name="Liu Z.A."/>
            <person name="Luros J.S."/>
            <person name="Maiti R."/>
            <person name="Marziali A."/>
            <person name="Militscher J."/>
            <person name="Miranda M."/>
            <person name="Nguyen M."/>
            <person name="Nierman W.C."/>
            <person name="Osborne B.I."/>
            <person name="Pai G."/>
            <person name="Peterson J."/>
            <person name="Pham P.K."/>
            <person name="Rizzo M."/>
            <person name="Rooney T."/>
            <person name="Rowley D."/>
            <person name="Sakano H."/>
            <person name="Salzberg S.L."/>
            <person name="Schwartz J.R."/>
            <person name="Shinn P."/>
            <person name="Southwick A.M."/>
            <person name="Sun H."/>
            <person name="Tallon L.J."/>
            <person name="Tambunga G."/>
            <person name="Toriumi M.J."/>
            <person name="Town C.D."/>
            <person name="Utterback T."/>
            <person name="Van Aken S."/>
            <person name="Vaysberg M."/>
            <person name="Vysotskaia V.S."/>
            <person name="Walker M."/>
            <person name="Wu D."/>
            <person name="Yu G."/>
            <person name="Fraser C.M."/>
            <person name="Venter J.C."/>
            <person name="Davis R.W."/>
        </authorList>
    </citation>
    <scope>NUCLEOTIDE SEQUENCE [LARGE SCALE GENOMIC DNA]</scope>
    <source>
        <strain>cv. Columbia</strain>
    </source>
</reference>
<reference key="5">
    <citation type="journal article" date="2017" name="Plant J.">
        <title>Araport11: a complete reannotation of the Arabidopsis thaliana reference genome.</title>
        <authorList>
            <person name="Cheng C.Y."/>
            <person name="Krishnakumar V."/>
            <person name="Chan A.P."/>
            <person name="Thibaud-Nissen F."/>
            <person name="Schobel S."/>
            <person name="Town C.D."/>
        </authorList>
    </citation>
    <scope>GENOME REANNOTATION</scope>
    <source>
        <strain>cv. Columbia</strain>
    </source>
</reference>
<reference key="6">
    <citation type="journal article" date="2003" name="Science">
        <title>Empirical analysis of transcriptional activity in the Arabidopsis genome.</title>
        <authorList>
            <person name="Yamada K."/>
            <person name="Lim J."/>
            <person name="Dale J.M."/>
            <person name="Chen H."/>
            <person name="Shinn P."/>
            <person name="Palm C.J."/>
            <person name="Southwick A.M."/>
            <person name="Wu H.C."/>
            <person name="Kim C.J."/>
            <person name="Nguyen M."/>
            <person name="Pham P.K."/>
            <person name="Cheuk R.F."/>
            <person name="Karlin-Newmann G."/>
            <person name="Liu S.X."/>
            <person name="Lam B."/>
            <person name="Sakano H."/>
            <person name="Wu T."/>
            <person name="Yu G."/>
            <person name="Miranda M."/>
            <person name="Quach H.L."/>
            <person name="Tripp M."/>
            <person name="Chang C.H."/>
            <person name="Lee J.M."/>
            <person name="Toriumi M.J."/>
            <person name="Chan M.M."/>
            <person name="Tang C.C."/>
            <person name="Onodera C.S."/>
            <person name="Deng J.M."/>
            <person name="Akiyama K."/>
            <person name="Ansari Y."/>
            <person name="Arakawa T."/>
            <person name="Banh J."/>
            <person name="Banno F."/>
            <person name="Bowser L."/>
            <person name="Brooks S.Y."/>
            <person name="Carninci P."/>
            <person name="Chao Q."/>
            <person name="Choy N."/>
            <person name="Enju A."/>
            <person name="Goldsmith A.D."/>
            <person name="Gurjal M."/>
            <person name="Hansen N.F."/>
            <person name="Hayashizaki Y."/>
            <person name="Johnson-Hopson C."/>
            <person name="Hsuan V.W."/>
            <person name="Iida K."/>
            <person name="Karnes M."/>
            <person name="Khan S."/>
            <person name="Koesema E."/>
            <person name="Ishida J."/>
            <person name="Jiang P.X."/>
            <person name="Jones T."/>
            <person name="Kawai J."/>
            <person name="Kamiya A."/>
            <person name="Meyers C."/>
            <person name="Nakajima M."/>
            <person name="Narusaka M."/>
            <person name="Seki M."/>
            <person name="Sakurai T."/>
            <person name="Satou M."/>
            <person name="Tamse R."/>
            <person name="Vaysberg M."/>
            <person name="Wallender E.K."/>
            <person name="Wong C."/>
            <person name="Yamamura Y."/>
            <person name="Yuan S."/>
            <person name="Shinozaki K."/>
            <person name="Davis R.W."/>
            <person name="Theologis A."/>
            <person name="Ecker J.R."/>
        </authorList>
    </citation>
    <scope>NUCLEOTIDE SEQUENCE [LARGE SCALE MRNA]</scope>
    <source>
        <strain>cv. Columbia</strain>
    </source>
</reference>
<reference key="7">
    <citation type="journal article" date="2004" name="Biochemistry">
        <title>Structural basis for herbicidal inhibitor selectivity revealed by comparison of crystal structures of plant and mammalian 4-hydroxyphenylpyruvate dioxygenases.</title>
        <authorList>
            <person name="Yang C."/>
            <person name="Pflugrath J.W."/>
            <person name="Camper D.L."/>
            <person name="Foster M.L."/>
            <person name="Pernich D.J."/>
            <person name="Walsh T.A."/>
        </authorList>
    </citation>
    <scope>X-RAY CRYSTALLOGRAPHY (1.8 ANGSTROMS) OF 23-445 IN COMPLEX WITH IRON</scope>
    <scope>COFACTOR</scope>
    <scope>METAL-BINDING SITES</scope>
    <scope>SUBUNIT</scope>
    <scope>FUNCTION</scope>
    <scope>CATALYTIC ACTIVITY</scope>
    <scope>BIOPHYSICOCHEMICAL PROPERTIES</scope>
</reference>
<reference key="8">
    <citation type="journal article" date="2004" name="Plant Physiol.">
        <title>The crystal structures of Zea mays and Arabidopsis 4-hydroxyphenylpyruvate dioxygenase.</title>
        <authorList>
            <person name="Fritze I.M."/>
            <person name="Linden L."/>
            <person name="Freigang J."/>
            <person name="Auerbach G."/>
            <person name="Huber R."/>
            <person name="Steinbacher S."/>
        </authorList>
    </citation>
    <scope>X-RAY CRYSTALLOGRAPHY (3.0 ANGSTROMS)</scope>
    <scope>SUBUNIT</scope>
</reference>
<proteinExistence type="evidence at protein level"/>
<dbReference type="EC" id="1.13.11.27" evidence="5"/>
<dbReference type="EMBL" id="U89267">
    <property type="protein sequence ID" value="AAB70025.1"/>
    <property type="molecule type" value="mRNA"/>
</dbReference>
<dbReference type="EMBL" id="AF000228">
    <property type="protein sequence ID" value="AAB58404.1"/>
    <property type="molecule type" value="mRNA"/>
</dbReference>
<dbReference type="EMBL" id="AF047834">
    <property type="protein sequence ID" value="AAC15697.1"/>
    <property type="molecule type" value="mRNA"/>
</dbReference>
<dbReference type="EMBL" id="AC007592">
    <property type="protein sequence ID" value="AAF24813.1"/>
    <property type="status" value="ALT_INIT"/>
    <property type="molecule type" value="Genomic_DNA"/>
</dbReference>
<dbReference type="EMBL" id="CP002684">
    <property type="protein sequence ID" value="AEE28006.2"/>
    <property type="molecule type" value="Genomic_DNA"/>
</dbReference>
<dbReference type="EMBL" id="AF428446">
    <property type="protein sequence ID" value="AAL16215.1"/>
    <property type="molecule type" value="mRNA"/>
</dbReference>
<dbReference type="EMBL" id="AY072329">
    <property type="protein sequence ID" value="AAL61936.1"/>
    <property type="molecule type" value="mRNA"/>
</dbReference>
<dbReference type="EMBL" id="AY128745">
    <property type="protein sequence ID" value="AAM91145.1"/>
    <property type="molecule type" value="mRNA"/>
</dbReference>
<dbReference type="PIR" id="B86201">
    <property type="entry name" value="B86201"/>
</dbReference>
<dbReference type="PIR" id="T51585">
    <property type="entry name" value="T51585"/>
</dbReference>
<dbReference type="RefSeq" id="NP_172144.3">
    <molecule id="P93836-1"/>
    <property type="nucleotide sequence ID" value="NM_100536.4"/>
</dbReference>
<dbReference type="PDB" id="1SP9">
    <property type="method" value="X-ray"/>
    <property type="resolution" value="3.00 A"/>
    <property type="chains" value="A/B=1-445"/>
</dbReference>
<dbReference type="PDB" id="1SQD">
    <property type="method" value="X-ray"/>
    <property type="resolution" value="1.80 A"/>
    <property type="chains" value="A=23-445"/>
</dbReference>
<dbReference type="PDB" id="1TFZ">
    <property type="method" value="X-ray"/>
    <property type="resolution" value="1.80 A"/>
    <property type="chains" value="A=23-445"/>
</dbReference>
<dbReference type="PDB" id="1TG5">
    <property type="method" value="X-ray"/>
    <property type="resolution" value="1.90 A"/>
    <property type="chains" value="A=23-445"/>
</dbReference>
<dbReference type="PDB" id="5XGK">
    <property type="method" value="X-ray"/>
    <property type="resolution" value="2.80 A"/>
    <property type="chains" value="A/B/C/D=1-445"/>
</dbReference>
<dbReference type="PDB" id="5YWG">
    <property type="method" value="X-ray"/>
    <property type="resolution" value="2.60 A"/>
    <property type="chains" value="A/B=1-445"/>
</dbReference>
<dbReference type="PDB" id="5YWH">
    <property type="method" value="X-ray"/>
    <property type="resolution" value="2.72 A"/>
    <property type="chains" value="A/B=1-445"/>
</dbReference>
<dbReference type="PDB" id="5YWI">
    <property type="method" value="X-ray"/>
    <property type="resolution" value="2.58 A"/>
    <property type="chains" value="A=32-445"/>
</dbReference>
<dbReference type="PDB" id="5YWK">
    <property type="method" value="X-ray"/>
    <property type="resolution" value="2.80 A"/>
    <property type="chains" value="A/B=1-445"/>
</dbReference>
<dbReference type="PDB" id="5YY6">
    <property type="method" value="X-ray"/>
    <property type="resolution" value="2.40 A"/>
    <property type="chains" value="A=32-445"/>
</dbReference>
<dbReference type="PDB" id="5YY7">
    <property type="method" value="X-ray"/>
    <property type="resolution" value="3.30 A"/>
    <property type="chains" value="A/B=1-445"/>
</dbReference>
<dbReference type="PDB" id="6ISD">
    <property type="method" value="X-ray"/>
    <property type="resolution" value="2.40 A"/>
    <property type="chains" value="A/B=1-445"/>
</dbReference>
<dbReference type="PDB" id="6J63">
    <property type="method" value="X-ray"/>
    <property type="resolution" value="2.62 A"/>
    <property type="chains" value="A/B/C/D=1-445"/>
</dbReference>
<dbReference type="PDB" id="6JX9">
    <property type="method" value="X-ray"/>
    <property type="resolution" value="1.80 A"/>
    <property type="chains" value="A=1-445"/>
</dbReference>
<dbReference type="PDB" id="6LGT">
    <property type="method" value="X-ray"/>
    <property type="resolution" value="1.79 A"/>
    <property type="chains" value="A=1-445"/>
</dbReference>
<dbReference type="PDB" id="6M6D">
    <property type="method" value="X-ray"/>
    <property type="resolution" value="1.84 A"/>
    <property type="chains" value="A=1-445"/>
</dbReference>
<dbReference type="PDB" id="7CJK">
    <property type="method" value="X-ray"/>
    <property type="resolution" value="1.70 A"/>
    <property type="chains" value="A=1-445"/>
</dbReference>
<dbReference type="PDB" id="7CQR">
    <property type="method" value="X-ray"/>
    <property type="resolution" value="1.95 A"/>
    <property type="chains" value="A=35-436"/>
</dbReference>
<dbReference type="PDB" id="7CQS">
    <property type="method" value="X-ray"/>
    <property type="resolution" value="2.00 A"/>
    <property type="chains" value="A=35-435"/>
</dbReference>
<dbReference type="PDB" id="7E0X">
    <property type="method" value="X-ray"/>
    <property type="resolution" value="1.89 A"/>
    <property type="chains" value="A=35-439"/>
</dbReference>
<dbReference type="PDB" id="7EZQ">
    <property type="method" value="X-ray"/>
    <property type="resolution" value="1.89 A"/>
    <property type="chains" value="A=33-438"/>
</dbReference>
<dbReference type="PDB" id="7V6X">
    <property type="method" value="X-ray"/>
    <property type="resolution" value="1.80 A"/>
    <property type="chains" value="A=33-445"/>
</dbReference>
<dbReference type="PDB" id="7VC8">
    <property type="method" value="X-ray"/>
    <property type="resolution" value="1.61 A"/>
    <property type="chains" value="A=33-445"/>
</dbReference>
<dbReference type="PDB" id="7VO8">
    <property type="method" value="X-ray"/>
    <property type="resolution" value="1.75 A"/>
    <property type="chains" value="A=35-438"/>
</dbReference>
<dbReference type="PDB" id="7WJ8">
    <property type="method" value="X-ray"/>
    <property type="resolution" value="1.80 A"/>
    <property type="chains" value="A=33-445"/>
</dbReference>
<dbReference type="PDB" id="7WJJ">
    <property type="method" value="X-ray"/>
    <property type="resolution" value="1.60 A"/>
    <property type="chains" value="A=33-445"/>
</dbReference>
<dbReference type="PDB" id="7WJK">
    <property type="method" value="X-ray"/>
    <property type="resolution" value="1.70 A"/>
    <property type="chains" value="A=33-445"/>
</dbReference>
<dbReference type="PDB" id="7X5R">
    <property type="method" value="X-ray"/>
    <property type="resolution" value="1.64 A"/>
    <property type="chains" value="A=33-445"/>
</dbReference>
<dbReference type="PDB" id="7X5S">
    <property type="method" value="X-ray"/>
    <property type="resolution" value="1.71 A"/>
    <property type="chains" value="A=33-445"/>
</dbReference>
<dbReference type="PDB" id="7X5U">
    <property type="method" value="X-ray"/>
    <property type="resolution" value="1.60 A"/>
    <property type="chains" value="A=33-445"/>
</dbReference>
<dbReference type="PDB" id="7X5W">
    <property type="method" value="X-ray"/>
    <property type="resolution" value="1.60 A"/>
    <property type="chains" value="A=33-445"/>
</dbReference>
<dbReference type="PDB" id="7X5X">
    <property type="method" value="X-ray"/>
    <property type="resolution" value="2.20 A"/>
    <property type="chains" value="A=33-445"/>
</dbReference>
<dbReference type="PDB" id="7X5Y">
    <property type="method" value="X-ray"/>
    <property type="resolution" value="1.50 A"/>
    <property type="chains" value="A=33-445"/>
</dbReference>
<dbReference type="PDB" id="7X5Z">
    <property type="method" value="X-ray"/>
    <property type="resolution" value="1.69 A"/>
    <property type="chains" value="A=33-445"/>
</dbReference>
<dbReference type="PDB" id="7X62">
    <property type="method" value="X-ray"/>
    <property type="resolution" value="2.00 A"/>
    <property type="chains" value="A=33-445"/>
</dbReference>
<dbReference type="PDB" id="7X64">
    <property type="method" value="X-ray"/>
    <property type="resolution" value="2.29 A"/>
    <property type="chains" value="A=33-445"/>
</dbReference>
<dbReference type="PDB" id="7X67">
    <property type="method" value="X-ray"/>
    <property type="resolution" value="2.00 A"/>
    <property type="chains" value="A=33-445"/>
</dbReference>
<dbReference type="PDB" id="7X69">
    <property type="method" value="X-ray"/>
    <property type="resolution" value="1.80 A"/>
    <property type="chains" value="A=33-445"/>
</dbReference>
<dbReference type="PDB" id="7X6M">
    <property type="method" value="X-ray"/>
    <property type="resolution" value="1.81 A"/>
    <property type="chains" value="A=33-445"/>
</dbReference>
<dbReference type="PDB" id="7X6N">
    <property type="method" value="X-ray"/>
    <property type="resolution" value="1.69 A"/>
    <property type="chains" value="A=33-445"/>
</dbReference>
<dbReference type="PDB" id="7X8D">
    <property type="method" value="X-ray"/>
    <property type="resolution" value="1.70 A"/>
    <property type="chains" value="A=33-445"/>
</dbReference>
<dbReference type="PDB" id="7X8H">
    <property type="method" value="X-ray"/>
    <property type="resolution" value="1.99 A"/>
    <property type="chains" value="A=33-445"/>
</dbReference>
<dbReference type="PDB" id="7X8I">
    <property type="method" value="X-ray"/>
    <property type="resolution" value="2.10 A"/>
    <property type="chains" value="A=33-445"/>
</dbReference>
<dbReference type="PDB" id="7XVH">
    <property type="method" value="X-ray"/>
    <property type="resolution" value="1.83 A"/>
    <property type="chains" value="A=33-445"/>
</dbReference>
<dbReference type="PDB" id="8GWD">
    <property type="method" value="X-ray"/>
    <property type="resolution" value="1.89 A"/>
    <property type="chains" value="A=33-445"/>
</dbReference>
<dbReference type="PDB" id="8H6A">
    <property type="method" value="X-ray"/>
    <property type="resolution" value="1.60 A"/>
    <property type="chains" value="A=33-445"/>
</dbReference>
<dbReference type="PDB" id="8H6B">
    <property type="method" value="X-ray"/>
    <property type="resolution" value="1.90 A"/>
    <property type="chains" value="A=33-445"/>
</dbReference>
<dbReference type="PDB" id="8HOW">
    <property type="method" value="X-ray"/>
    <property type="resolution" value="1.79 A"/>
    <property type="chains" value="A=33-445"/>
</dbReference>
<dbReference type="PDB" id="8HWR">
    <property type="method" value="X-ray"/>
    <property type="resolution" value="2.18 A"/>
    <property type="chains" value="A=33-445"/>
</dbReference>
<dbReference type="PDB" id="8HX2">
    <property type="method" value="X-ray"/>
    <property type="resolution" value="2.00 A"/>
    <property type="chains" value="A=33-445"/>
</dbReference>
<dbReference type="PDB" id="8HX4">
    <property type="method" value="X-ray"/>
    <property type="resolution" value="1.90 A"/>
    <property type="chains" value="A=33-445"/>
</dbReference>
<dbReference type="PDB" id="8HXF">
    <property type="method" value="X-ray"/>
    <property type="resolution" value="1.70 A"/>
    <property type="chains" value="A=33-445"/>
</dbReference>
<dbReference type="PDB" id="8HXG">
    <property type="method" value="X-ray"/>
    <property type="resolution" value="1.70 A"/>
    <property type="chains" value="A=33-445"/>
</dbReference>
<dbReference type="PDB" id="8HXH">
    <property type="method" value="X-ray"/>
    <property type="resolution" value="1.99 A"/>
    <property type="chains" value="A=33-445"/>
</dbReference>
<dbReference type="PDB" id="8HYM">
    <property type="method" value="X-ray"/>
    <property type="resolution" value="1.79 A"/>
    <property type="chains" value="A=33-445"/>
</dbReference>
<dbReference type="PDB" id="8HYO">
    <property type="method" value="X-ray"/>
    <property type="resolution" value="2.00 A"/>
    <property type="chains" value="A=33-445"/>
</dbReference>
<dbReference type="PDB" id="8HYP">
    <property type="method" value="X-ray"/>
    <property type="resolution" value="1.75 A"/>
    <property type="chains" value="A=33-445"/>
</dbReference>
<dbReference type="PDB" id="8HYS">
    <property type="method" value="X-ray"/>
    <property type="resolution" value="1.70 A"/>
    <property type="chains" value="A=33-445"/>
</dbReference>
<dbReference type="PDB" id="8HZ6">
    <property type="method" value="X-ray"/>
    <property type="resolution" value="1.60 A"/>
    <property type="chains" value="A=33-445"/>
</dbReference>
<dbReference type="PDB" id="8HZ7">
    <property type="method" value="X-ray"/>
    <property type="resolution" value="1.80 A"/>
    <property type="chains" value="A=33-445"/>
</dbReference>
<dbReference type="PDB" id="8HZ9">
    <property type="method" value="X-ray"/>
    <property type="resolution" value="2.01 A"/>
    <property type="chains" value="A=33-445"/>
</dbReference>
<dbReference type="PDB" id="8HZA">
    <property type="method" value="X-ray"/>
    <property type="resolution" value="1.69 A"/>
    <property type="chains" value="A=33-445"/>
</dbReference>
<dbReference type="PDB" id="8HZU">
    <property type="method" value="X-ray"/>
    <property type="resolution" value="1.80 A"/>
    <property type="chains" value="A=33-445"/>
</dbReference>
<dbReference type="PDB" id="8I0G">
    <property type="method" value="X-ray"/>
    <property type="resolution" value="1.99 A"/>
    <property type="chains" value="A=33-445"/>
</dbReference>
<dbReference type="PDB" id="8I0Y">
    <property type="method" value="X-ray"/>
    <property type="resolution" value="1.79 A"/>
    <property type="chains" value="A=33-445"/>
</dbReference>
<dbReference type="PDB" id="8I15">
    <property type="method" value="X-ray"/>
    <property type="resolution" value="2.19 A"/>
    <property type="chains" value="A=33-445"/>
</dbReference>
<dbReference type="PDB" id="8I2P">
    <property type="method" value="X-ray"/>
    <property type="resolution" value="1.80 A"/>
    <property type="chains" value="A=33-445"/>
</dbReference>
<dbReference type="PDB" id="8I2S">
    <property type="method" value="X-ray"/>
    <property type="resolution" value="1.59 A"/>
    <property type="chains" value="A=33-445"/>
</dbReference>
<dbReference type="PDB" id="8I2U">
    <property type="method" value="X-ray"/>
    <property type="resolution" value="1.99 A"/>
    <property type="chains" value="A=33-445"/>
</dbReference>
<dbReference type="PDB" id="8I36">
    <property type="method" value="X-ray"/>
    <property type="resolution" value="1.89 A"/>
    <property type="chains" value="A=33-445"/>
</dbReference>
<dbReference type="PDB" id="8IOK">
    <property type="method" value="X-ray"/>
    <property type="resolution" value="1.99 A"/>
    <property type="chains" value="A=33-445"/>
</dbReference>
<dbReference type="PDB" id="8J3C">
    <property type="method" value="X-ray"/>
    <property type="resolution" value="1.70 A"/>
    <property type="chains" value="A=33-445"/>
</dbReference>
<dbReference type="PDB" id="8J8W">
    <property type="method" value="X-ray"/>
    <property type="resolution" value="1.60 A"/>
    <property type="chains" value="A=33-445"/>
</dbReference>
<dbReference type="PDB" id="8J8X">
    <property type="method" value="X-ray"/>
    <property type="resolution" value="1.60 A"/>
    <property type="chains" value="A=33-445"/>
</dbReference>
<dbReference type="PDB" id="8WHO">
    <property type="method" value="X-ray"/>
    <property type="resolution" value="1.89 A"/>
    <property type="chains" value="A=33-445"/>
</dbReference>
<dbReference type="PDB" id="8WHP">
    <property type="method" value="X-ray"/>
    <property type="resolution" value="1.92 A"/>
    <property type="chains" value="A=33-445"/>
</dbReference>
<dbReference type="PDB" id="8WHQ">
    <property type="method" value="X-ray"/>
    <property type="resolution" value="1.70 A"/>
    <property type="chains" value="A=33-445"/>
</dbReference>
<dbReference type="PDB" id="8WI6">
    <property type="method" value="X-ray"/>
    <property type="resolution" value="1.92 A"/>
    <property type="chains" value="A=33-445"/>
</dbReference>
<dbReference type="PDB" id="8WJZ">
    <property type="method" value="X-ray"/>
    <property type="resolution" value="1.61 A"/>
    <property type="chains" value="A=33-445"/>
</dbReference>
<dbReference type="PDB" id="8WK2">
    <property type="method" value="X-ray"/>
    <property type="resolution" value="1.81 A"/>
    <property type="chains" value="A=33-445"/>
</dbReference>
<dbReference type="PDB" id="8WL0">
    <property type="method" value="X-ray"/>
    <property type="resolution" value="1.79 A"/>
    <property type="chains" value="A=33-445"/>
</dbReference>
<dbReference type="PDB" id="8WPC">
    <property type="method" value="X-ray"/>
    <property type="resolution" value="1.80 A"/>
    <property type="chains" value="A=33-445"/>
</dbReference>
<dbReference type="PDB" id="8WPD">
    <property type="method" value="X-ray"/>
    <property type="resolution" value="1.80 A"/>
    <property type="chains" value="A=33-445"/>
</dbReference>
<dbReference type="PDB" id="8WQM">
    <property type="method" value="X-ray"/>
    <property type="resolution" value="1.80 A"/>
    <property type="chains" value="A=33-445"/>
</dbReference>
<dbReference type="PDB" id="8X42">
    <property type="method" value="X-ray"/>
    <property type="resolution" value="2.10 A"/>
    <property type="chains" value="A=33-445"/>
</dbReference>
<dbReference type="PDB" id="8X5C">
    <property type="method" value="X-ray"/>
    <property type="resolution" value="1.79 A"/>
    <property type="chains" value="A=33-445"/>
</dbReference>
<dbReference type="PDB" id="8X68">
    <property type="method" value="X-ray"/>
    <property type="resolution" value="1.90 A"/>
    <property type="chains" value="A=33-445"/>
</dbReference>
<dbReference type="PDB" id="8X69">
    <property type="method" value="X-ray"/>
    <property type="resolution" value="1.80 A"/>
    <property type="chains" value="A=33-445"/>
</dbReference>
<dbReference type="PDB" id="8X6A">
    <property type="method" value="X-ray"/>
    <property type="resolution" value="1.48 A"/>
    <property type="chains" value="A=33-445"/>
</dbReference>
<dbReference type="PDB" id="8X6C">
    <property type="method" value="X-ray"/>
    <property type="resolution" value="1.80 A"/>
    <property type="chains" value="A=33-445"/>
</dbReference>
<dbReference type="PDB" id="8XHJ">
    <property type="method" value="X-ray"/>
    <property type="resolution" value="2.19 A"/>
    <property type="chains" value="A=33-445"/>
</dbReference>
<dbReference type="PDB" id="8XIB">
    <property type="method" value="X-ray"/>
    <property type="resolution" value="2.10 A"/>
    <property type="chains" value="A=33-445"/>
</dbReference>
<dbReference type="PDB" id="8XII">
    <property type="method" value="X-ray"/>
    <property type="resolution" value="1.60 A"/>
    <property type="chains" value="A=33-445"/>
</dbReference>
<dbReference type="PDB" id="8XIN">
    <property type="method" value="X-ray"/>
    <property type="resolution" value="1.69 A"/>
    <property type="chains" value="A=33-445"/>
</dbReference>
<dbReference type="PDB" id="8XLW">
    <property type="method" value="X-ray"/>
    <property type="resolution" value="1.49 A"/>
    <property type="chains" value="A=33-445"/>
</dbReference>
<dbReference type="PDB" id="8XLX">
    <property type="method" value="X-ray"/>
    <property type="resolution" value="1.56 A"/>
    <property type="chains" value="A=33-445"/>
</dbReference>
<dbReference type="PDB" id="8XLY">
    <property type="method" value="X-ray"/>
    <property type="resolution" value="2.11 A"/>
    <property type="chains" value="A/B=33-445"/>
</dbReference>
<dbReference type="PDB" id="8XQV">
    <property type="method" value="X-ray"/>
    <property type="resolution" value="2.70 A"/>
    <property type="chains" value="A/B=35-437"/>
</dbReference>
<dbReference type="PDB" id="8XQY">
    <property type="method" value="X-ray"/>
    <property type="resolution" value="2.00 A"/>
    <property type="chains" value="A=33-445"/>
</dbReference>
<dbReference type="PDB" id="8XQZ">
    <property type="method" value="X-ray"/>
    <property type="resolution" value="1.78 A"/>
    <property type="chains" value="A=33-445"/>
</dbReference>
<dbReference type="PDB" id="8XR0">
    <property type="method" value="X-ray"/>
    <property type="resolution" value="2.00 A"/>
    <property type="chains" value="A=33-445"/>
</dbReference>
<dbReference type="PDB" id="8XU9">
    <property type="method" value="X-ray"/>
    <property type="resolution" value="2.22 A"/>
    <property type="chains" value="A=33-445"/>
</dbReference>
<dbReference type="PDB" id="8XUC">
    <property type="method" value="X-ray"/>
    <property type="resolution" value="1.81 A"/>
    <property type="chains" value="A=33-445"/>
</dbReference>
<dbReference type="PDB" id="8XUE">
    <property type="method" value="X-ray"/>
    <property type="resolution" value="2.22 A"/>
    <property type="chains" value="A=33-445"/>
</dbReference>
<dbReference type="PDB" id="8XUG">
    <property type="method" value="X-ray"/>
    <property type="resolution" value="1.89 A"/>
    <property type="chains" value="A=33-445"/>
</dbReference>
<dbReference type="PDBsum" id="1SP9"/>
<dbReference type="PDBsum" id="1SQD"/>
<dbReference type="PDBsum" id="1TFZ"/>
<dbReference type="PDBsum" id="1TG5"/>
<dbReference type="PDBsum" id="5XGK"/>
<dbReference type="PDBsum" id="5YWG"/>
<dbReference type="PDBsum" id="5YWH"/>
<dbReference type="PDBsum" id="5YWI"/>
<dbReference type="PDBsum" id="5YWK"/>
<dbReference type="PDBsum" id="5YY6"/>
<dbReference type="PDBsum" id="5YY7"/>
<dbReference type="PDBsum" id="6ISD"/>
<dbReference type="PDBsum" id="6J63"/>
<dbReference type="PDBsum" id="6JX9"/>
<dbReference type="PDBsum" id="6LGT"/>
<dbReference type="PDBsum" id="6M6D"/>
<dbReference type="PDBsum" id="7CJK"/>
<dbReference type="PDBsum" id="7CQR"/>
<dbReference type="PDBsum" id="7CQS"/>
<dbReference type="PDBsum" id="7E0X"/>
<dbReference type="PDBsum" id="7EZQ"/>
<dbReference type="PDBsum" id="7V6X"/>
<dbReference type="PDBsum" id="7VC8"/>
<dbReference type="PDBsum" id="7VO8"/>
<dbReference type="PDBsum" id="7WJ8"/>
<dbReference type="PDBsum" id="7WJJ"/>
<dbReference type="PDBsum" id="7WJK"/>
<dbReference type="PDBsum" id="7X5R"/>
<dbReference type="PDBsum" id="7X5S"/>
<dbReference type="PDBsum" id="7X5U"/>
<dbReference type="PDBsum" id="7X5W"/>
<dbReference type="PDBsum" id="7X5X"/>
<dbReference type="PDBsum" id="7X5Y"/>
<dbReference type="PDBsum" id="7X5Z"/>
<dbReference type="PDBsum" id="7X62"/>
<dbReference type="PDBsum" id="7X64"/>
<dbReference type="PDBsum" id="7X67"/>
<dbReference type="PDBsum" id="7X69"/>
<dbReference type="PDBsum" id="7X6M"/>
<dbReference type="PDBsum" id="7X6N"/>
<dbReference type="PDBsum" id="7X8D"/>
<dbReference type="PDBsum" id="7X8H"/>
<dbReference type="PDBsum" id="7X8I"/>
<dbReference type="PDBsum" id="7XVH"/>
<dbReference type="PDBsum" id="8GWD"/>
<dbReference type="PDBsum" id="8H6A"/>
<dbReference type="PDBsum" id="8H6B"/>
<dbReference type="PDBsum" id="8HOW"/>
<dbReference type="PDBsum" id="8HWR"/>
<dbReference type="PDBsum" id="8HX2"/>
<dbReference type="PDBsum" id="8HX4"/>
<dbReference type="PDBsum" id="8HXF"/>
<dbReference type="PDBsum" id="8HXG"/>
<dbReference type="PDBsum" id="8HXH"/>
<dbReference type="PDBsum" id="8HYM"/>
<dbReference type="PDBsum" id="8HYO"/>
<dbReference type="PDBsum" id="8HYP"/>
<dbReference type="PDBsum" id="8HYS"/>
<dbReference type="PDBsum" id="8HZ6"/>
<dbReference type="PDBsum" id="8HZ7"/>
<dbReference type="PDBsum" id="8HZ9"/>
<dbReference type="PDBsum" id="8HZA"/>
<dbReference type="PDBsum" id="8HZU"/>
<dbReference type="PDBsum" id="8I0G"/>
<dbReference type="PDBsum" id="8I0Y"/>
<dbReference type="PDBsum" id="8I15"/>
<dbReference type="PDBsum" id="8I2P"/>
<dbReference type="PDBsum" id="8I2S"/>
<dbReference type="PDBsum" id="8I2U"/>
<dbReference type="PDBsum" id="8I36"/>
<dbReference type="PDBsum" id="8IOK"/>
<dbReference type="PDBsum" id="8J3C"/>
<dbReference type="PDBsum" id="8J8W"/>
<dbReference type="PDBsum" id="8J8X"/>
<dbReference type="PDBsum" id="8WHO"/>
<dbReference type="PDBsum" id="8WHP"/>
<dbReference type="PDBsum" id="8WHQ"/>
<dbReference type="PDBsum" id="8WI6"/>
<dbReference type="PDBsum" id="8WJZ"/>
<dbReference type="PDBsum" id="8WK2"/>
<dbReference type="PDBsum" id="8WL0"/>
<dbReference type="PDBsum" id="8WPC"/>
<dbReference type="PDBsum" id="8WPD"/>
<dbReference type="PDBsum" id="8WQM"/>
<dbReference type="PDBsum" id="8X42"/>
<dbReference type="PDBsum" id="8X5C"/>
<dbReference type="PDBsum" id="8X68"/>
<dbReference type="PDBsum" id="8X69"/>
<dbReference type="PDBsum" id="8X6A"/>
<dbReference type="PDBsum" id="8X6C"/>
<dbReference type="PDBsum" id="8XHJ"/>
<dbReference type="PDBsum" id="8XIB"/>
<dbReference type="PDBsum" id="8XII"/>
<dbReference type="PDBsum" id="8XIN"/>
<dbReference type="PDBsum" id="8XLW"/>
<dbReference type="PDBsum" id="8XLX"/>
<dbReference type="PDBsum" id="8XLY"/>
<dbReference type="PDBsum" id="8XQV"/>
<dbReference type="PDBsum" id="8XQY"/>
<dbReference type="PDBsum" id="8XQZ"/>
<dbReference type="PDBsum" id="8XR0"/>
<dbReference type="PDBsum" id="8XU9"/>
<dbReference type="PDBsum" id="8XUC"/>
<dbReference type="PDBsum" id="8XUE"/>
<dbReference type="PDBsum" id="8XUG"/>
<dbReference type="SMR" id="P93836"/>
<dbReference type="FunCoup" id="P93836">
    <property type="interactions" value="562"/>
</dbReference>
<dbReference type="STRING" id="3702.P93836"/>
<dbReference type="BindingDB" id="P93836"/>
<dbReference type="ChEMBL" id="CHEMBL2242740"/>
<dbReference type="iPTMnet" id="P93836"/>
<dbReference type="PaxDb" id="3702-AT1G06570.1"/>
<dbReference type="ProteomicsDB" id="230267">
    <molecule id="P93836-1"/>
</dbReference>
<dbReference type="EnsemblPlants" id="AT1G06570.1">
    <molecule id="P93836-1"/>
    <property type="protein sequence ID" value="AT1G06570.1"/>
    <property type="gene ID" value="AT1G06570"/>
</dbReference>
<dbReference type="GeneID" id="837168"/>
<dbReference type="Gramene" id="AT1G06570.1">
    <molecule id="P93836-1"/>
    <property type="protein sequence ID" value="AT1G06570.1"/>
    <property type="gene ID" value="AT1G06570"/>
</dbReference>
<dbReference type="KEGG" id="ath:AT1G06570"/>
<dbReference type="Araport" id="AT1G06570"/>
<dbReference type="TAIR" id="AT1G06570">
    <property type="gene designation" value="PDS1"/>
</dbReference>
<dbReference type="eggNOG" id="KOG0638">
    <property type="taxonomic scope" value="Eukaryota"/>
</dbReference>
<dbReference type="HOGENOM" id="CLU_034004_1_1_1"/>
<dbReference type="InParanoid" id="P93836"/>
<dbReference type="OMA" id="DPFPVKG"/>
<dbReference type="OrthoDB" id="414569at2759"/>
<dbReference type="PhylomeDB" id="P93836"/>
<dbReference type="BRENDA" id="1.13.11.27">
    <property type="organism ID" value="399"/>
</dbReference>
<dbReference type="SABIO-RK" id="P93836"/>
<dbReference type="UniPathway" id="UPA00139">
    <property type="reaction ID" value="UER00362"/>
</dbReference>
<dbReference type="UniPathway" id="UPA00975"/>
<dbReference type="EvolutionaryTrace" id="P93836"/>
<dbReference type="PRO" id="PR:P93836"/>
<dbReference type="Proteomes" id="UP000006548">
    <property type="component" value="Chromosome 1"/>
</dbReference>
<dbReference type="ExpressionAtlas" id="P93836">
    <property type="expression patterns" value="baseline and differential"/>
</dbReference>
<dbReference type="GO" id="GO:0005737">
    <property type="term" value="C:cytoplasm"/>
    <property type="evidence" value="ECO:0007669"/>
    <property type="project" value="UniProtKB-SubCell"/>
</dbReference>
<dbReference type="GO" id="GO:0003868">
    <property type="term" value="F:4-hydroxyphenylpyruvate dioxygenase activity"/>
    <property type="evidence" value="ECO:0000314"/>
    <property type="project" value="UniProtKB"/>
</dbReference>
<dbReference type="GO" id="GO:0042802">
    <property type="term" value="F:identical protein binding"/>
    <property type="evidence" value="ECO:0000353"/>
    <property type="project" value="IntAct"/>
</dbReference>
<dbReference type="GO" id="GO:0005506">
    <property type="term" value="F:iron ion binding"/>
    <property type="evidence" value="ECO:0000314"/>
    <property type="project" value="UniProtKB"/>
</dbReference>
<dbReference type="GO" id="GO:0006559">
    <property type="term" value="P:L-phenylalanine catabolic process"/>
    <property type="evidence" value="ECO:0007669"/>
    <property type="project" value="UniProtKB-UniPathway"/>
</dbReference>
<dbReference type="GO" id="GO:0006572">
    <property type="term" value="P:tyrosine catabolic process"/>
    <property type="evidence" value="ECO:0007669"/>
    <property type="project" value="UniProtKB-KW"/>
</dbReference>
<dbReference type="CDD" id="cd07250">
    <property type="entry name" value="HPPD_C_like"/>
    <property type="match status" value="1"/>
</dbReference>
<dbReference type="CDD" id="cd08342">
    <property type="entry name" value="HPPD_N_like"/>
    <property type="match status" value="1"/>
</dbReference>
<dbReference type="FunFam" id="3.10.180.10:FF:000013">
    <property type="entry name" value="4-hydroxyphenylpyruvate dioxygenase"/>
    <property type="match status" value="1"/>
</dbReference>
<dbReference type="FunFam" id="3.10.180.10:FF:000025">
    <property type="entry name" value="4-hydroxyphenylpyruvate dioxygenase"/>
    <property type="match status" value="1"/>
</dbReference>
<dbReference type="Gene3D" id="3.10.180.10">
    <property type="entry name" value="2,3-Dihydroxybiphenyl 1,2-Dioxygenase, domain 1"/>
    <property type="match status" value="2"/>
</dbReference>
<dbReference type="InterPro" id="IPR005956">
    <property type="entry name" value="4OHPhenylPyrv_dOase"/>
</dbReference>
<dbReference type="InterPro" id="IPR041735">
    <property type="entry name" value="4OHPhenylPyrv_dOase_C"/>
</dbReference>
<dbReference type="InterPro" id="IPR041736">
    <property type="entry name" value="4OHPhenylPyrv_dOase_N"/>
</dbReference>
<dbReference type="InterPro" id="IPR029068">
    <property type="entry name" value="Glyas_Bleomycin-R_OHBP_Dase"/>
</dbReference>
<dbReference type="InterPro" id="IPR004360">
    <property type="entry name" value="Glyas_Fos-R_dOase_dom"/>
</dbReference>
<dbReference type="InterPro" id="IPR037523">
    <property type="entry name" value="VOC"/>
</dbReference>
<dbReference type="NCBIfam" id="TIGR01263">
    <property type="entry name" value="4HPPD"/>
    <property type="match status" value="1"/>
</dbReference>
<dbReference type="PANTHER" id="PTHR11959">
    <property type="entry name" value="4-HYDROXYPHENYLPYRUVATE DIOXYGENASE"/>
    <property type="match status" value="1"/>
</dbReference>
<dbReference type="PANTHER" id="PTHR11959:SF1">
    <property type="entry name" value="4-HYDROXYPHENYLPYRUVATE DIOXYGENASE"/>
    <property type="match status" value="1"/>
</dbReference>
<dbReference type="Pfam" id="PF00903">
    <property type="entry name" value="Glyoxalase"/>
    <property type="match status" value="1"/>
</dbReference>
<dbReference type="PIRSF" id="PIRSF009283">
    <property type="entry name" value="HPP_dOase"/>
    <property type="match status" value="1"/>
</dbReference>
<dbReference type="SUPFAM" id="SSF54593">
    <property type="entry name" value="Glyoxalase/Bleomycin resistance protein/Dihydroxybiphenyl dioxygenase"/>
    <property type="match status" value="1"/>
</dbReference>
<dbReference type="PROSITE" id="PS51819">
    <property type="entry name" value="VOC"/>
    <property type="match status" value="2"/>
</dbReference>
<name>HPPD_ARATH</name>
<gene>
    <name type="primary">HPD</name>
    <name type="synonym">PDS1</name>
    <name type="ordered locus">At1g06570</name>
    <name type="ORF">F12K11.9</name>
</gene>